<evidence type="ECO:0000255" key="1">
    <source>
        <dbReference type="HAMAP-Rule" id="MF_00230"/>
    </source>
</evidence>
<accession>B2S5A1</accession>
<keyword id="KW-0169">Cobalamin biosynthesis</keyword>
<keyword id="KW-0328">Glycosyltransferase</keyword>
<keyword id="KW-0808">Transferase</keyword>
<dbReference type="EC" id="2.4.2.21" evidence="1"/>
<dbReference type="EMBL" id="CP000887">
    <property type="protein sequence ID" value="ACD72348.1"/>
    <property type="molecule type" value="Genomic_DNA"/>
</dbReference>
<dbReference type="RefSeq" id="WP_002963997.1">
    <property type="nucleotide sequence ID" value="NC_010742.1"/>
</dbReference>
<dbReference type="SMR" id="B2S5A1"/>
<dbReference type="GeneID" id="93016754"/>
<dbReference type="KEGG" id="bmc:BAbS19_I08270"/>
<dbReference type="HOGENOM" id="CLU_002982_0_1_5"/>
<dbReference type="UniPathway" id="UPA00061">
    <property type="reaction ID" value="UER00516"/>
</dbReference>
<dbReference type="Proteomes" id="UP000002565">
    <property type="component" value="Chromosome 1"/>
</dbReference>
<dbReference type="GO" id="GO:0008939">
    <property type="term" value="F:nicotinate-nucleotide-dimethylbenzimidazole phosphoribosyltransferase activity"/>
    <property type="evidence" value="ECO:0007669"/>
    <property type="project" value="UniProtKB-UniRule"/>
</dbReference>
<dbReference type="GO" id="GO:0009236">
    <property type="term" value="P:cobalamin biosynthetic process"/>
    <property type="evidence" value="ECO:0007669"/>
    <property type="project" value="UniProtKB-KW"/>
</dbReference>
<dbReference type="CDD" id="cd02439">
    <property type="entry name" value="DMB-PRT_CobT"/>
    <property type="match status" value="1"/>
</dbReference>
<dbReference type="Gene3D" id="1.10.1610.10">
    <property type="match status" value="1"/>
</dbReference>
<dbReference type="Gene3D" id="3.40.50.10210">
    <property type="match status" value="1"/>
</dbReference>
<dbReference type="HAMAP" id="MF_00230">
    <property type="entry name" value="CobT"/>
    <property type="match status" value="1"/>
</dbReference>
<dbReference type="InterPro" id="IPR003200">
    <property type="entry name" value="Nict_dMeBzImd_PRibTrfase"/>
</dbReference>
<dbReference type="InterPro" id="IPR017846">
    <property type="entry name" value="Nict_dMeBzImd_PRibTrfase_bact"/>
</dbReference>
<dbReference type="InterPro" id="IPR023195">
    <property type="entry name" value="Nict_dMeBzImd_PRibTrfase_N"/>
</dbReference>
<dbReference type="InterPro" id="IPR036087">
    <property type="entry name" value="Nict_dMeBzImd_PRibTrfase_sf"/>
</dbReference>
<dbReference type="NCBIfam" id="TIGR03160">
    <property type="entry name" value="cobT_DBIPRT"/>
    <property type="match status" value="1"/>
</dbReference>
<dbReference type="NCBIfam" id="NF000996">
    <property type="entry name" value="PRK00105.1"/>
    <property type="match status" value="1"/>
</dbReference>
<dbReference type="PANTHER" id="PTHR43463">
    <property type="entry name" value="NICOTINATE-NUCLEOTIDE--DIMETHYLBENZIMIDAZOLE PHOSPHORIBOSYLTRANSFERASE"/>
    <property type="match status" value="1"/>
</dbReference>
<dbReference type="PANTHER" id="PTHR43463:SF1">
    <property type="entry name" value="NICOTINATE-NUCLEOTIDE--DIMETHYLBENZIMIDAZOLE PHOSPHORIBOSYLTRANSFERASE"/>
    <property type="match status" value="1"/>
</dbReference>
<dbReference type="Pfam" id="PF02277">
    <property type="entry name" value="DBI_PRT"/>
    <property type="match status" value="1"/>
</dbReference>
<dbReference type="SUPFAM" id="SSF52733">
    <property type="entry name" value="Nicotinate mononucleotide:5,6-dimethylbenzimidazole phosphoribosyltransferase (CobT)"/>
    <property type="match status" value="1"/>
</dbReference>
<reference key="1">
    <citation type="journal article" date="2008" name="PLoS ONE">
        <title>Genome sequence of Brucella abortus vaccine strain S19 compared to virulent strains yields candidate virulence genes.</title>
        <authorList>
            <person name="Crasta O.R."/>
            <person name="Folkerts O."/>
            <person name="Fei Z."/>
            <person name="Mane S.P."/>
            <person name="Evans C."/>
            <person name="Martino-Catt S."/>
            <person name="Bricker B."/>
            <person name="Yu G."/>
            <person name="Du L."/>
            <person name="Sobral B.W."/>
        </authorList>
    </citation>
    <scope>NUCLEOTIDE SEQUENCE [LARGE SCALE GENOMIC DNA]</scope>
    <source>
        <strain>S19</strain>
    </source>
</reference>
<sequence length="339" mass="35117">MSASGLPFDDFRELIRNLPGPDLGAERAVREREVTLTKPAGSLGRLEEIVAWLATWTGKRTPQVNRPLVAVFAGNHGVTAKNITPFPPSVTAQMVENFAAGGAAINQICIANDLGLKVFDLALEHPTGDITEEAAMDEHTCAATMAFGMEAIAGGTDLLCIGEMGIGNTTIAAAIALALFGGTAEDWVGPGTGSTGELMQRKLAAVRQAVALHQPHLQDPLEVLRCLGGREIAAMAGAILAARMEKIPVIVDGFVASAAAAVLYAANPEAIDHCMFGHVSAEPGHRKLLAKMGKEPLLDLGMRLGEGTGAALAANIVKAAALCHSGMATFEQAGVSASK</sequence>
<name>COBT_BRUA1</name>
<feature type="chain" id="PRO_1000100458" description="Nicotinate-nucleotide--dimethylbenzimidazole phosphoribosyltransferase">
    <location>
        <begin position="1"/>
        <end position="339"/>
    </location>
</feature>
<feature type="active site" description="Proton acceptor" evidence="1">
    <location>
        <position position="306"/>
    </location>
</feature>
<protein>
    <recommendedName>
        <fullName evidence="1">Nicotinate-nucleotide--dimethylbenzimidazole phosphoribosyltransferase</fullName>
        <shortName evidence="1">NN:DBI PRT</shortName>
        <ecNumber evidence="1">2.4.2.21</ecNumber>
    </recommendedName>
    <alternativeName>
        <fullName evidence="1">N(1)-alpha-phosphoribosyltransferase</fullName>
    </alternativeName>
</protein>
<gene>
    <name evidence="1" type="primary">cobT</name>
    <name type="ordered locus">BAbS19_I08270</name>
</gene>
<proteinExistence type="inferred from homology"/>
<comment type="function">
    <text evidence="1">Catalyzes the synthesis of alpha-ribazole-5'-phosphate from nicotinate mononucleotide (NAMN) and 5,6-dimethylbenzimidazole (DMB).</text>
</comment>
<comment type="catalytic activity">
    <reaction evidence="1">
        <text>5,6-dimethylbenzimidazole + nicotinate beta-D-ribonucleotide = alpha-ribazole 5'-phosphate + nicotinate + H(+)</text>
        <dbReference type="Rhea" id="RHEA:11196"/>
        <dbReference type="ChEBI" id="CHEBI:15378"/>
        <dbReference type="ChEBI" id="CHEBI:15890"/>
        <dbReference type="ChEBI" id="CHEBI:32544"/>
        <dbReference type="ChEBI" id="CHEBI:57502"/>
        <dbReference type="ChEBI" id="CHEBI:57918"/>
        <dbReference type="EC" id="2.4.2.21"/>
    </reaction>
</comment>
<comment type="pathway">
    <text evidence="1">Nucleoside biosynthesis; alpha-ribazole biosynthesis; alpha-ribazole from 5,6-dimethylbenzimidazole: step 1/2.</text>
</comment>
<comment type="similarity">
    <text evidence="1">Belongs to the CobT family.</text>
</comment>
<organism>
    <name type="scientific">Brucella abortus (strain S19)</name>
    <dbReference type="NCBI Taxonomy" id="430066"/>
    <lineage>
        <taxon>Bacteria</taxon>
        <taxon>Pseudomonadati</taxon>
        <taxon>Pseudomonadota</taxon>
        <taxon>Alphaproteobacteria</taxon>
        <taxon>Hyphomicrobiales</taxon>
        <taxon>Brucellaceae</taxon>
        <taxon>Brucella/Ochrobactrum group</taxon>
        <taxon>Brucella</taxon>
    </lineage>
</organism>